<organism>
    <name type="scientific">Planomicrobium okeanokoites</name>
    <name type="common">Planococcus okeanokoites</name>
    <name type="synonym">Flavobacterium okeanokoites</name>
    <dbReference type="NCBI Taxonomy" id="244"/>
    <lineage>
        <taxon>Bacteria</taxon>
        <taxon>Bacillati</taxon>
        <taxon>Bacillota</taxon>
        <taxon>Bacilli</taxon>
        <taxon>Bacillales</taxon>
        <taxon>Caryophanaceae</taxon>
        <taxon>Planomicrobium</taxon>
    </lineage>
</organism>
<keyword id="KW-0002">3D-structure</keyword>
<keyword id="KW-0903">Direct protein sequencing</keyword>
<keyword id="KW-0238">DNA-binding</keyword>
<keyword id="KW-0255">Endonuclease</keyword>
<keyword id="KW-0378">Hydrolase</keyword>
<keyword id="KW-0460">Magnesium</keyword>
<keyword id="KW-0540">Nuclease</keyword>
<keyword id="KW-0680">Restriction system</keyword>
<feature type="initiator methionine" description="Removed" evidence="2">
    <location>
        <position position="1"/>
    </location>
</feature>
<feature type="chain" id="PRO_0000077308" description="Type II restriction enzyme FokI">
    <location>
        <begin position="2"/>
        <end position="579"/>
    </location>
</feature>
<feature type="active site" evidence="9">
    <location>
        <position position="450"/>
    </location>
</feature>
<feature type="active site" evidence="9">
    <location>
        <position position="467"/>
    </location>
</feature>
<feature type="active site" evidence="9">
    <location>
        <position position="469"/>
    </location>
</feature>
<feature type="helix" evidence="12">
    <location>
        <begin position="17"/>
        <end position="24"/>
    </location>
</feature>
<feature type="helix" evidence="12">
    <location>
        <begin position="32"/>
        <end position="39"/>
    </location>
</feature>
<feature type="helix" evidence="12">
    <location>
        <begin position="41"/>
        <end position="45"/>
    </location>
</feature>
<feature type="helix" evidence="12">
    <location>
        <begin position="49"/>
        <end position="60"/>
    </location>
</feature>
<feature type="strand" evidence="12">
    <location>
        <begin position="61"/>
        <end position="63"/>
    </location>
</feature>
<feature type="helix" evidence="12">
    <location>
        <begin position="68"/>
        <end position="72"/>
    </location>
</feature>
<feature type="helix" evidence="11">
    <location>
        <begin position="79"/>
        <end position="81"/>
    </location>
</feature>
<feature type="helix" evidence="12">
    <location>
        <begin position="87"/>
        <end position="91"/>
    </location>
</feature>
<feature type="strand" evidence="11">
    <location>
        <begin position="98"/>
        <end position="101"/>
    </location>
</feature>
<feature type="helix" evidence="12">
    <location>
        <begin position="104"/>
        <end position="116"/>
    </location>
</feature>
<feature type="strand" evidence="12">
    <location>
        <begin position="119"/>
        <end position="123"/>
    </location>
</feature>
<feature type="turn" evidence="12">
    <location>
        <begin position="124"/>
        <end position="127"/>
    </location>
</feature>
<feature type="strand" evidence="12">
    <location>
        <begin position="128"/>
        <end position="131"/>
    </location>
</feature>
<feature type="helix" evidence="12">
    <location>
        <begin position="133"/>
        <end position="140"/>
    </location>
</feature>
<feature type="helix" evidence="12">
    <location>
        <begin position="146"/>
        <end position="157"/>
    </location>
</feature>
<feature type="helix" evidence="12">
    <location>
        <begin position="160"/>
        <end position="169"/>
    </location>
</feature>
<feature type="helix" evidence="12">
    <location>
        <begin position="177"/>
        <end position="181"/>
    </location>
</feature>
<feature type="strand" evidence="12">
    <location>
        <begin position="184"/>
        <end position="186"/>
    </location>
</feature>
<feature type="helix" evidence="12">
    <location>
        <begin position="197"/>
        <end position="205"/>
    </location>
</feature>
<feature type="helix" evidence="12">
    <location>
        <begin position="209"/>
        <end position="218"/>
    </location>
</feature>
<feature type="helix" evidence="12">
    <location>
        <begin position="222"/>
        <end position="236"/>
    </location>
</feature>
<feature type="strand" evidence="12">
    <location>
        <begin position="239"/>
        <end position="242"/>
    </location>
</feature>
<feature type="strand" evidence="12">
    <location>
        <begin position="245"/>
        <end position="248"/>
    </location>
</feature>
<feature type="strand" evidence="12">
    <location>
        <begin position="258"/>
        <end position="267"/>
    </location>
</feature>
<feature type="helix" evidence="12">
    <location>
        <begin position="269"/>
        <end position="279"/>
    </location>
</feature>
<feature type="strand" evidence="12">
    <location>
        <begin position="282"/>
        <end position="284"/>
    </location>
</feature>
<feature type="helix" evidence="12">
    <location>
        <begin position="293"/>
        <end position="295"/>
    </location>
</feature>
<feature type="helix" evidence="12">
    <location>
        <begin position="303"/>
        <end position="319"/>
    </location>
</feature>
<feature type="strand" evidence="12">
    <location>
        <begin position="321"/>
        <end position="324"/>
    </location>
</feature>
<feature type="helix" evidence="12">
    <location>
        <begin position="325"/>
        <end position="334"/>
    </location>
</feature>
<feature type="helix" evidence="12">
    <location>
        <begin position="341"/>
        <end position="352"/>
    </location>
</feature>
<feature type="turn" evidence="12">
    <location>
        <begin position="353"/>
        <end position="355"/>
    </location>
</feature>
<feature type="strand" evidence="12">
    <location>
        <begin position="358"/>
        <end position="361"/>
    </location>
</feature>
<feature type="strand" evidence="12">
    <location>
        <begin position="364"/>
        <end position="367"/>
    </location>
</feature>
<feature type="turn" evidence="11">
    <location>
        <begin position="377"/>
        <end position="380"/>
    </location>
</feature>
<feature type="helix" evidence="11">
    <location>
        <begin position="382"/>
        <end position="384"/>
    </location>
</feature>
<feature type="helix" evidence="12">
    <location>
        <begin position="389"/>
        <end position="398"/>
    </location>
</feature>
<feature type="strand" evidence="12">
    <location>
        <begin position="402"/>
        <end position="404"/>
    </location>
</feature>
<feature type="helix" evidence="12">
    <location>
        <begin position="406"/>
        <end position="410"/>
    </location>
</feature>
<feature type="helix" evidence="12">
    <location>
        <begin position="411"/>
        <end position="414"/>
    </location>
</feature>
<feature type="helix" evidence="12">
    <location>
        <begin position="418"/>
        <end position="420"/>
    </location>
</feature>
<feature type="helix" evidence="12">
    <location>
        <begin position="421"/>
        <end position="434"/>
    </location>
</feature>
<feature type="strand" evidence="12">
    <location>
        <begin position="439"/>
        <end position="442"/>
    </location>
</feature>
<feature type="strand" evidence="12">
    <location>
        <begin position="445"/>
        <end position="448"/>
    </location>
</feature>
<feature type="strand" evidence="12">
    <location>
        <begin position="450"/>
        <end position="454"/>
    </location>
</feature>
<feature type="strand" evidence="12">
    <location>
        <begin position="456"/>
        <end position="460"/>
    </location>
</feature>
<feature type="strand" evidence="12">
    <location>
        <begin position="463"/>
        <end position="469"/>
    </location>
</feature>
<feature type="helix" evidence="12">
    <location>
        <begin position="479"/>
        <end position="494"/>
    </location>
</feature>
<feature type="turn" evidence="12">
    <location>
        <begin position="497"/>
        <end position="499"/>
    </location>
</feature>
<feature type="helix" evidence="12">
    <location>
        <begin position="504"/>
        <end position="507"/>
    </location>
</feature>
<feature type="strand" evidence="12">
    <location>
        <begin position="515"/>
        <end position="522"/>
    </location>
</feature>
<feature type="helix" evidence="12">
    <location>
        <begin position="528"/>
        <end position="539"/>
    </location>
</feature>
<feature type="strand" evidence="12">
    <location>
        <begin position="542"/>
        <end position="547"/>
    </location>
</feature>
<feature type="helix" evidence="12">
    <location>
        <begin position="548"/>
        <end position="560"/>
    </location>
</feature>
<feature type="helix" evidence="12">
    <location>
        <begin position="565"/>
        <end position="569"/>
    </location>
</feature>
<feature type="strand" evidence="12">
    <location>
        <begin position="573"/>
        <end position="576"/>
    </location>
</feature>
<name>T2F1_PLAOK</name>
<accession>P14870</accession>
<protein>
    <recommendedName>
        <fullName evidence="5">Type II restriction enzyme FokI</fullName>
        <shortName evidence="7 8">R.FokI</shortName>
        <ecNumber evidence="4">3.1.21.4</ecNumber>
    </recommendedName>
    <alternativeName>
        <fullName>Endonuclease FokI</fullName>
    </alternativeName>
    <alternativeName>
        <fullName>Type-2 restriction enzyme FokI</fullName>
    </alternativeName>
</protein>
<dbReference type="EC" id="3.1.21.4" evidence="4"/>
<dbReference type="EMBL" id="J04623">
    <property type="protein sequence ID" value="AAA24927.1"/>
    <property type="status" value="ALT_INIT"/>
    <property type="molecule type" value="Genomic_DNA"/>
</dbReference>
<dbReference type="EMBL" id="M28828">
    <property type="protein sequence ID" value="AAA24934.1"/>
    <property type="molecule type" value="Genomic_DNA"/>
</dbReference>
<dbReference type="RefSeq" id="WP_205854618.1">
    <property type="nucleotide sequence ID" value="NZ_JBHRUJ010000010.1"/>
</dbReference>
<dbReference type="PDB" id="1FOK">
    <property type="method" value="X-ray"/>
    <property type="resolution" value="2.80 A"/>
    <property type="chains" value="A=4-579"/>
</dbReference>
<dbReference type="PDB" id="2FOK">
    <property type="method" value="X-ray"/>
    <property type="resolution" value="2.30 A"/>
    <property type="chains" value="A/B=1-579"/>
</dbReference>
<dbReference type="PDBsum" id="1FOK"/>
<dbReference type="PDBsum" id="2FOK"/>
<dbReference type="SMR" id="P14870"/>
<dbReference type="REBASE" id="1056">
    <property type="entry name" value="FokI"/>
</dbReference>
<dbReference type="BRENDA" id="3.1.21.4">
    <property type="organism ID" value="2296"/>
</dbReference>
<dbReference type="CD-CODE" id="92558670">
    <property type="entry name" value="PML body"/>
</dbReference>
<dbReference type="EvolutionaryTrace" id="P14870"/>
<dbReference type="PRO" id="PR:P14870"/>
<dbReference type="GO" id="GO:0003677">
    <property type="term" value="F:DNA binding"/>
    <property type="evidence" value="ECO:0007669"/>
    <property type="project" value="UniProtKB-KW"/>
</dbReference>
<dbReference type="GO" id="GO:0009036">
    <property type="term" value="F:type II site-specific deoxyribonuclease activity"/>
    <property type="evidence" value="ECO:0007669"/>
    <property type="project" value="UniProtKB-EC"/>
</dbReference>
<dbReference type="GO" id="GO:0009307">
    <property type="term" value="P:DNA restriction-modification system"/>
    <property type="evidence" value="ECO:0007669"/>
    <property type="project" value="UniProtKB-KW"/>
</dbReference>
<dbReference type="CDD" id="cd00941">
    <property type="entry name" value="FokI_N"/>
    <property type="match status" value="1"/>
</dbReference>
<dbReference type="CDD" id="cd22327">
    <property type="entry name" value="FokI_nuclease-like"/>
    <property type="match status" value="1"/>
</dbReference>
<dbReference type="Gene3D" id="3.40.91.30">
    <property type="match status" value="1"/>
</dbReference>
<dbReference type="Gene3D" id="3.90.241.10">
    <property type="entry name" value="Foki Restriction Endonuclease, Chain A, domain 1"/>
    <property type="match status" value="1"/>
</dbReference>
<dbReference type="Gene3D" id="1.10.10.10">
    <property type="entry name" value="Winged helix-like DNA-binding domain superfamily/Winged helix DNA-binding domain"/>
    <property type="match status" value="1"/>
</dbReference>
<dbReference type="InterPro" id="IPR015334">
    <property type="entry name" value="FokI_cleavage_dom"/>
</dbReference>
<dbReference type="InterPro" id="IPR004234">
    <property type="entry name" value="FokI_D1"/>
</dbReference>
<dbReference type="InterPro" id="IPR004233">
    <property type="entry name" value="FokI_D2"/>
</dbReference>
<dbReference type="InterPro" id="IPR031655">
    <property type="entry name" value="FokI_D3"/>
</dbReference>
<dbReference type="InterPro" id="IPR044945">
    <property type="entry name" value="FokI_dom_1_2"/>
</dbReference>
<dbReference type="InterPro" id="IPR011335">
    <property type="entry name" value="Restrct_endonuc-II-like"/>
</dbReference>
<dbReference type="InterPro" id="IPR036388">
    <property type="entry name" value="WH-like_DNA-bd_sf"/>
</dbReference>
<dbReference type="InterPro" id="IPR036390">
    <property type="entry name" value="WH_DNA-bd_sf"/>
</dbReference>
<dbReference type="Pfam" id="PF09254">
    <property type="entry name" value="FokI_cleav_dom"/>
    <property type="match status" value="1"/>
</dbReference>
<dbReference type="Pfam" id="PF02981">
    <property type="entry name" value="FokI_D1"/>
    <property type="match status" value="1"/>
</dbReference>
<dbReference type="Pfam" id="PF16902">
    <property type="entry name" value="FokI_D3"/>
    <property type="match status" value="1"/>
</dbReference>
<dbReference type="Pfam" id="PF02980">
    <property type="entry name" value="FokI_dom_2"/>
    <property type="match status" value="1"/>
</dbReference>
<dbReference type="SUPFAM" id="SSF52980">
    <property type="entry name" value="Restriction endonuclease-like"/>
    <property type="match status" value="1"/>
</dbReference>
<dbReference type="SUPFAM" id="SSF46785">
    <property type="entry name" value="Winged helix' DNA-binding domain"/>
    <property type="match status" value="3"/>
</dbReference>
<proteinExistence type="evidence at protein level"/>
<evidence type="ECO:0000269" key="1">
    <source>
    </source>
</evidence>
<evidence type="ECO:0000269" key="2">
    <source>
    </source>
</evidence>
<evidence type="ECO:0000269" key="3">
    <source>
    </source>
</evidence>
<evidence type="ECO:0000269" key="4">
    <source>
    </source>
</evidence>
<evidence type="ECO:0000303" key="5">
    <source>
    </source>
</evidence>
<evidence type="ECO:0000303" key="6">
    <source>
    </source>
</evidence>
<evidence type="ECO:0000303" key="7">
    <source>
    </source>
</evidence>
<evidence type="ECO:0000303" key="8">
    <source>
    </source>
</evidence>
<evidence type="ECO:0000303" key="9">
    <source>
    </source>
</evidence>
<evidence type="ECO:0000305" key="10"/>
<evidence type="ECO:0007829" key="11">
    <source>
        <dbReference type="PDB" id="1FOK"/>
    </source>
</evidence>
<evidence type="ECO:0007829" key="12">
    <source>
        <dbReference type="PDB" id="2FOK"/>
    </source>
</evidence>
<comment type="function">
    <text evidence="4 5">An S subtype restriction enzyme that recognizes the asymmetric double-stranded sequence 5'-GGATG-3' and cleaves respectively 14 bases after G-1 (top strand) and 13 bases before C-1 (bottom strand).</text>
</comment>
<comment type="catalytic activity">
    <reaction evidence="4">
        <text>Endonucleolytic cleavage of DNA to give specific double-stranded fragments with terminal 5'-phosphates.</text>
        <dbReference type="EC" id="3.1.21.4"/>
    </reaction>
</comment>
<comment type="cofactor">
    <cofactor>
        <name>Mg(2+)</name>
        <dbReference type="ChEBI" id="CHEBI:18420"/>
    </cofactor>
</comment>
<comment type="subunit">
    <text evidence="3 4">Monomer, in which form it can cleave DNA. Homodimer when bound to DNA.</text>
</comment>
<comment type="domain">
    <text evidence="9">Has an N-terminal DNA recognition domain (approximately residues 1-292) joined to an endonuclease domain (residues 389-583) by a flexible linker.</text>
</comment>
<comment type="biotechnology">
    <text evidence="1 6">Adding the endonuclease domain C-terminal to different DNA recognition domains from other enzymes allows generation of novel restriction enzymes that are used to genetically engineer eukaryotic cells.</text>
</comment>
<comment type="sequence caution" evidence="10">
    <conflict type="erroneous initiation">
        <sequence resource="EMBL-CDS" id="AAA24927"/>
    </conflict>
    <text>Extended N-terminus.</text>
</comment>
<reference key="1">
    <citation type="journal article" date="1989" name="J. Biol. Chem.">
        <title>The fokI restriction-modification system. I. Organization and nucleotide sequences of the restriction and modification genes.</title>
        <authorList>
            <person name="Kita K."/>
            <person name="Kotani H."/>
            <person name="Sugisaki H."/>
            <person name="Takanami M."/>
        </authorList>
    </citation>
    <scope>NUCLEOTIDE SEQUENCE [GENOMIC DNA]</scope>
    <source>
        <strain>ATCC 33414 / DSM 15489 / NBRC 12536 / NCIMB 561 / CIP 105082 / LMG 4030 / VKM B-1175</strain>
    </source>
</reference>
<reference key="2">
    <citation type="journal article" date="1989" name="Gene">
        <title>Nucleotide sequence of the FokI restriction-modification system: separate strand-specificity domains in the methyltransferase.</title>
        <authorList>
            <person name="Looney M.C."/>
            <person name="Moran L.S."/>
            <person name="Jack W.E."/>
            <person name="Feehery G.R."/>
            <person name="Benner J.S."/>
            <person name="Slatko B.E."/>
            <person name="Wilson G.G."/>
        </authorList>
    </citation>
    <scope>NUCLEOTIDE SEQUENCE [GENOMIC DNA]</scope>
    <scope>PROTEIN SEQUENCE OF 2-26</scope>
</reference>
<reference key="3">
    <citation type="journal article" date="1998" name="Proc. Natl. Acad. Sci. U.S.A.">
        <title>FokI dimerization is required for DNA cleavage.</title>
        <authorList>
            <person name="Bitinaite J."/>
            <person name="Wah D.A."/>
            <person name="Aggarwal A.K."/>
            <person name="Schildkraut I."/>
        </authorList>
    </citation>
    <scope>SUBUNIT</scope>
</reference>
<reference key="4">
    <citation type="journal article" date="2003" name="Nucleic Acids Res.">
        <title>A nomenclature for restriction enzymes, DNA methyltransferases, homing endonucleases and their genes.</title>
        <authorList>
            <person name="Roberts R.J."/>
            <person name="Belfort M."/>
            <person name="Bestor T."/>
            <person name="Bhagwat A.S."/>
            <person name="Bickle T.A."/>
            <person name="Bitinaite J."/>
            <person name="Blumenthal R.M."/>
            <person name="Degtyarev S.K."/>
            <person name="Dryden D.T."/>
            <person name="Dybvig K."/>
            <person name="Firman K."/>
            <person name="Gromova E.S."/>
            <person name="Gumport R.I."/>
            <person name="Halford S.E."/>
            <person name="Hattman S."/>
            <person name="Heitman J."/>
            <person name="Hornby D.P."/>
            <person name="Janulaitis A."/>
            <person name="Jeltsch A."/>
            <person name="Josephsen J."/>
            <person name="Kiss A."/>
            <person name="Klaenhammer T.R."/>
            <person name="Kobayashi I."/>
            <person name="Kong H."/>
            <person name="Krueger D.H."/>
            <person name="Lacks S."/>
            <person name="Marinus M.G."/>
            <person name="Miyahara M."/>
            <person name="Morgan R.D."/>
            <person name="Murray N.E."/>
            <person name="Nagaraja V."/>
            <person name="Piekarowicz A."/>
            <person name="Pingoud A."/>
            <person name="Raleigh E."/>
            <person name="Rao D.N."/>
            <person name="Reich N."/>
            <person name="Repin V.E."/>
            <person name="Selker E.U."/>
            <person name="Shaw P.C."/>
            <person name="Stein D.C."/>
            <person name="Stoddard B.L."/>
            <person name="Szybalski W."/>
            <person name="Trautner T.A."/>
            <person name="Van Etten J.L."/>
            <person name="Vitor J.M."/>
            <person name="Wilson G.G."/>
            <person name="Xu S.Y."/>
        </authorList>
    </citation>
    <scope>NOMENCLATURE</scope>
    <scope>SUBTYPE</scope>
</reference>
<reference key="5">
    <citation type="journal article" date="2014" name="Nucleic Acids Res.">
        <title>Programmable DNA-binding proteins from Burkholderia provide a fresh perspective on the TALE-like repeat domain.</title>
        <authorList>
            <person name="de Lange O."/>
            <person name="Wolf C."/>
            <person name="Dietze J."/>
            <person name="Elsaesser J."/>
            <person name="Morbitzer R."/>
            <person name="Lahaye T."/>
        </authorList>
    </citation>
    <scope>BIOTECHNOLOGY</scope>
</reference>
<reference key="6">
    <citation type="journal article" date="2014" name="Biochem. J.">
        <title>TALEN-mediated genome editing: prospects and perspectives.</title>
        <authorList>
            <person name="Wright D.A."/>
            <person name="Li T."/>
            <person name="Yang B."/>
            <person name="Spalding M.H."/>
        </authorList>
    </citation>
    <scope>BIOTECHNOLOGY USES REVIEW</scope>
</reference>
<reference key="7">
    <citation type="journal article" date="1997" name="Nature">
        <title>Structure of the multimodular endonuclease FokI bound to DNA.</title>
        <authorList>
            <person name="Wah D.A."/>
            <person name="Hirsch J.A."/>
            <person name="Dorner L.F."/>
            <person name="Schildkraut I."/>
            <person name="Aggarwal A.K."/>
        </authorList>
    </citation>
    <scope>X-RAY CRYSTALLOGRAPHY (2.8 ANGSTROMS)</scope>
    <scope>SUBUNIT</scope>
    <scope>DOMAIN</scope>
    <scope>DNA-BINDING</scope>
    <scope>ACTIVE SITE</scope>
    <source>
        <strain>ATCC 33414 / DSM 15489 / NBRC 12536 / NCIMB 561 / CIP 105082 / LMG 4030 / VKM B-1175</strain>
    </source>
</reference>
<reference key="8">
    <citation type="journal article" date="1998" name="Proc. Natl. Acad. Sci. U.S.A.">
        <title>Structure of FokI has implications for DNA cleavage.</title>
        <authorList>
            <person name="Wah D.A."/>
            <person name="Bitinaite J."/>
            <person name="Schildkraut I."/>
            <person name="Aggarwal A.K."/>
        </authorList>
    </citation>
    <scope>X-RAY CRYSTALLOGRAPHY (2.3 ANGSTROMS)</scope>
    <source>
        <strain>ATCC 33414 / DSM 15489 / NBRC 12536 / NCIMB 561 / CIP 105082 / LMG 4030 / VKM B-1175</strain>
    </source>
</reference>
<sequence>MVSKIRTFGWVQNPGKFENLKRVVQVFDRNSKVHNEVKNIKIPTLVKESKIQKELVAIMNQHDLIYTYKELVGTGTSIRSEAPCDAIIQATIADQGNKKGYIDNWSSDGFLRWAHALGFIEYINKSDSFVITDVGLAYSKSADGSAIEKEILIEAISSYPPAIRILTLLEDGQHLTKFDLGKNLGFSGESGFTSLPEGILLDTLANAMPKDKGEIRNNWEGSSDKYARMIGGWLDKLGLVKQGKKEFIIPTLGKPDNKEFISHAFKITGEGLKVLRRAKGSTKFTRVPKRVYWEMLATNLTDKEYVRTRRALILEILIKAGSLKIEQIQDNLKKLGFDEVIETIENDIKGLINTGIFIEIKGRFYQLKDHILQFVIPNRGVTKQLVKSELEEKKSELRHKLKYVPHEYIELIEIARNSTQDRILEMKVMEFFMKVYGYRGKHLGGSRKPDGAIYTVGSPIDYGVIVDTKAYSGGYNLPIGQADEMQRYVEENQTRNKHINPNEWWKVYPSSVTEFKFLFVSGHFKGNYKAQLTRLNHITNCNGAVLSVEELLIGGEMIKAGTLTLEEVRRKFNNGEINF</sequence>
<gene>
    <name evidence="7" type="primary">fokIR</name>
    <name type="synonym">rfoKI</name>
</gene>